<proteinExistence type="evidence at protein level"/>
<reference key="1">
    <citation type="journal article" date="1996" name="Yeast">
        <title>Sequence and analysis of a 33 kb fragment from the right arm of chromosome XV of the yeast Saccharomyces cerevisiae.</title>
        <authorList>
            <person name="Galisson F."/>
            <person name="Dujon B."/>
        </authorList>
    </citation>
    <scope>NUCLEOTIDE SEQUENCE [GENOMIC DNA]</scope>
    <source>
        <strain>ATCC 96604 / S288c / FY1679</strain>
    </source>
</reference>
<reference key="2">
    <citation type="journal article" date="1997" name="Nature">
        <title>The nucleotide sequence of Saccharomyces cerevisiae chromosome XV.</title>
        <authorList>
            <person name="Dujon B."/>
            <person name="Albermann K."/>
            <person name="Aldea M."/>
            <person name="Alexandraki D."/>
            <person name="Ansorge W."/>
            <person name="Arino J."/>
            <person name="Benes V."/>
            <person name="Bohn C."/>
            <person name="Bolotin-Fukuhara M."/>
            <person name="Bordonne R."/>
            <person name="Boyer J."/>
            <person name="Camasses A."/>
            <person name="Casamayor A."/>
            <person name="Casas C."/>
            <person name="Cheret G."/>
            <person name="Cziepluch C."/>
            <person name="Daignan-Fornier B."/>
            <person name="Dang V.-D."/>
            <person name="de Haan M."/>
            <person name="Delius H."/>
            <person name="Durand P."/>
            <person name="Fairhead C."/>
            <person name="Feldmann H."/>
            <person name="Gaillon L."/>
            <person name="Galisson F."/>
            <person name="Gamo F.-J."/>
            <person name="Gancedo C."/>
            <person name="Goffeau A."/>
            <person name="Goulding S.E."/>
            <person name="Grivell L.A."/>
            <person name="Habbig B."/>
            <person name="Hand N.J."/>
            <person name="Hani J."/>
            <person name="Hattenhorst U."/>
            <person name="Hebling U."/>
            <person name="Hernando Y."/>
            <person name="Herrero E."/>
            <person name="Heumann K."/>
            <person name="Hiesel R."/>
            <person name="Hilger F."/>
            <person name="Hofmann B."/>
            <person name="Hollenberg C.P."/>
            <person name="Hughes B."/>
            <person name="Jauniaux J.-C."/>
            <person name="Kalogeropoulos A."/>
            <person name="Katsoulou C."/>
            <person name="Kordes E."/>
            <person name="Lafuente M.J."/>
            <person name="Landt O."/>
            <person name="Louis E.J."/>
            <person name="Maarse A.C."/>
            <person name="Madania A."/>
            <person name="Mannhaupt G."/>
            <person name="Marck C."/>
            <person name="Martin R.P."/>
            <person name="Mewes H.-W."/>
            <person name="Michaux G."/>
            <person name="Paces V."/>
            <person name="Parle-McDermott A.G."/>
            <person name="Pearson B.M."/>
            <person name="Perrin A."/>
            <person name="Pettersson B."/>
            <person name="Poch O."/>
            <person name="Pohl T.M."/>
            <person name="Poirey R."/>
            <person name="Portetelle D."/>
            <person name="Pujol A."/>
            <person name="Purnelle B."/>
            <person name="Ramezani Rad M."/>
            <person name="Rechmann S."/>
            <person name="Schwager C."/>
            <person name="Schweizer M."/>
            <person name="Sor F."/>
            <person name="Sterky F."/>
            <person name="Tarassov I.A."/>
            <person name="Teodoru C."/>
            <person name="Tettelin H."/>
            <person name="Thierry A."/>
            <person name="Tobiasch E."/>
            <person name="Tzermia M."/>
            <person name="Uhlen M."/>
            <person name="Unseld M."/>
            <person name="Valens M."/>
            <person name="Vandenbol M."/>
            <person name="Vetter I."/>
            <person name="Vlcek C."/>
            <person name="Voet M."/>
            <person name="Volckaert G."/>
            <person name="Voss H."/>
            <person name="Wambutt R."/>
            <person name="Wedler H."/>
            <person name="Wiemann S."/>
            <person name="Winsor B."/>
            <person name="Wolfe K.H."/>
            <person name="Zollner A."/>
            <person name="Zumstein E."/>
            <person name="Kleine K."/>
        </authorList>
    </citation>
    <scope>NUCLEOTIDE SEQUENCE [LARGE SCALE GENOMIC DNA]</scope>
    <source>
        <strain>ATCC 204508 / S288c</strain>
    </source>
</reference>
<reference key="3">
    <citation type="journal article" date="2014" name="G3 (Bethesda)">
        <title>The reference genome sequence of Saccharomyces cerevisiae: Then and now.</title>
        <authorList>
            <person name="Engel S.R."/>
            <person name="Dietrich F.S."/>
            <person name="Fisk D.G."/>
            <person name="Binkley G."/>
            <person name="Balakrishnan R."/>
            <person name="Costanzo M.C."/>
            <person name="Dwight S.S."/>
            <person name="Hitz B.C."/>
            <person name="Karra K."/>
            <person name="Nash R.S."/>
            <person name="Weng S."/>
            <person name="Wong E.D."/>
            <person name="Lloyd P."/>
            <person name="Skrzypek M.S."/>
            <person name="Miyasato S.R."/>
            <person name="Simison M."/>
            <person name="Cherry J.M."/>
        </authorList>
    </citation>
    <scope>GENOME REANNOTATION</scope>
    <source>
        <strain>ATCC 204508 / S288c</strain>
    </source>
</reference>
<reference key="4">
    <citation type="journal article" date="1999" name="Genetics">
        <title>Identification of SAS4 and SAS5, two genes that regulate silencing in Saccharomyces cerevisiae.</title>
        <authorList>
            <person name="Xu E.Y."/>
            <person name="Kim S."/>
            <person name="Replogle K."/>
            <person name="Rine J."/>
            <person name="Rivier D.H."/>
        </authorList>
    </citation>
    <scope>FUNCTION</scope>
</reference>
<reference key="5">
    <citation type="journal article" date="1999" name="Genetics">
        <title>SAS4 and SAS5 are locus-specific regulators of silencing in Saccharomyces cerevisiae.</title>
        <authorList>
            <person name="Xu E.Y."/>
            <person name="Kim S."/>
            <person name="Rivier D.H."/>
        </authorList>
    </citation>
    <scope>FUNCTION</scope>
</reference>
<reference key="6">
    <citation type="journal article" date="2001" name="Genes Dev.">
        <title>The yeast SAS (something about silencing) protein complex contains a MYST-type putative acetyltransferase and functions with chromatin assembly factor ASF1.</title>
        <authorList>
            <person name="Osada S."/>
            <person name="Sutton A."/>
            <person name="Muster N."/>
            <person name="Brown C.E."/>
            <person name="Yates J.R. III"/>
            <person name="Sternglanz R."/>
            <person name="Workman J.L."/>
        </authorList>
    </citation>
    <scope>IDENTIFICATION BY MASS SPECTROMETRY</scope>
    <scope>COMPONENT OF THE SAS COMPLEX WITH SAS2 AND SAS5</scope>
</reference>
<reference key="7">
    <citation type="journal article" date="2001" name="Genes Dev.">
        <title>The silencing complex SAS-I links histone acetylation to the assembly of repressed chromatin by CAF-I and Asf1 in Saccharomyces cerevisiae.</title>
        <authorList>
            <person name="Meijsing S.H."/>
            <person name="Ehrenhofer-Murray A.E."/>
        </authorList>
    </citation>
    <scope>SUBCELLULAR LOCATION</scope>
    <scope>COMPONENT OF THE SAS COMPLEX WITH SAS2 AND SAS5</scope>
</reference>
<reference key="8">
    <citation type="journal article" date="2003" name="J. Biol. Chem.">
        <title>Sas4 and Sas5 are required for the histone acetyltransferase activity of Sas2 in the SAS complex.</title>
        <authorList>
            <person name="Sutton A."/>
            <person name="Shia W.-J."/>
            <person name="Band D."/>
            <person name="Kaufman P.D."/>
            <person name="Osada S."/>
            <person name="Workman J.L."/>
            <person name="Sternglanz R."/>
        </authorList>
    </citation>
    <scope>FUNCTION OF THE SAS COMPLEX</scope>
</reference>
<reference key="9">
    <citation type="journal article" date="2003" name="Nature">
        <title>Global analysis of protein expression in yeast.</title>
        <authorList>
            <person name="Ghaemmaghami S."/>
            <person name="Huh W.-K."/>
            <person name="Bower K."/>
            <person name="Howson R.W."/>
            <person name="Belle A."/>
            <person name="Dephoure N."/>
            <person name="O'Shea E.K."/>
            <person name="Weissman J.S."/>
        </authorList>
    </citation>
    <scope>LEVEL OF PROTEIN EXPRESSION [LARGE SCALE ANALYSIS]</scope>
</reference>
<reference key="10">
    <citation type="journal article" date="2005" name="Genetics">
        <title>Multiple bromodomain genes are involved in restricting the spread of heterochromatic silencing at the Saccharomyces cerevisiae HMR-tRNA boundary.</title>
        <authorList>
            <person name="Jambunathan N."/>
            <person name="Martinez A.W."/>
            <person name="Robert E.C."/>
            <person name="Agochukwu N.B."/>
            <person name="Ibos M.E."/>
            <person name="Dugas S.L."/>
            <person name="Donze D."/>
        </authorList>
    </citation>
    <scope>DISRUPTION PHENOTYPE</scope>
</reference>
<reference key="11">
    <citation type="journal article" date="2008" name="Mol. Cell. Proteomics">
        <title>A multidimensional chromatography technology for in-depth phosphoproteome analysis.</title>
        <authorList>
            <person name="Albuquerque C.P."/>
            <person name="Smolka M.B."/>
            <person name="Payne S.H."/>
            <person name="Bafna V."/>
            <person name="Eng J."/>
            <person name="Zhou H."/>
        </authorList>
    </citation>
    <scope>PHOSPHORYLATION [LARGE SCALE ANALYSIS] AT SER-144</scope>
    <scope>IDENTIFICATION BY MASS SPECTROMETRY [LARGE SCALE ANALYSIS]</scope>
</reference>
<keyword id="KW-0002">3D-structure</keyword>
<keyword id="KW-0156">Chromatin regulator</keyword>
<keyword id="KW-0539">Nucleus</keyword>
<keyword id="KW-0597">Phosphoprotein</keyword>
<keyword id="KW-1185">Reference proteome</keyword>
<keyword id="KW-0678">Repressor</keyword>
<keyword id="KW-0804">Transcription</keyword>
<keyword id="KW-0805">Transcription regulation</keyword>
<protein>
    <recommendedName>
        <fullName>Something about silencing protein 5</fullName>
    </recommendedName>
</protein>
<comment type="function">
    <text evidence="3 4 6">Component of the SAS complex, a multiprotein complex that acetylates 'Lys-16' of histone H4 and 'Lys-14' of histone H3. The SAS complex is however unable to acetylate nucleosomal histones. The complex is involved in transcriptional silencing at telomeres and at HML locus. Also involved in rDNA silencing. In the complex, SAS5 is required for maximal histone acetyltransferase (HAT) activity of the complex, suggesting that it may be required to stabilize the complex or help in substrate recognition.</text>
</comment>
<comment type="subunit">
    <text>Component of the SAS complex, at least composed of SAS2, SAS4 and SAS5. These three proteins constitute the core of the complex, and are sufficient to acetylate histones.</text>
</comment>
<comment type="interaction">
    <interactant intactId="EBI-31212">
        <id>Q99314</id>
    </interactant>
    <interactant intactId="EBI-38500">
        <id>Q04003</id>
        <label>SAS4</label>
    </interactant>
    <organismsDiffer>false</organismsDiffer>
    <experiments>4</experiments>
</comment>
<comment type="subcellular location">
    <subcellularLocation>
        <location evidence="1 5">Nucleus</location>
    </subcellularLocation>
</comment>
<comment type="disruption phenotype">
    <text evidence="8">Heterochromatin spreading downstream of the silent mating-type locus HMR.</text>
</comment>
<comment type="miscellaneous">
    <text evidence="7">Present with 1800 molecules/cell in log phase SD medium.</text>
</comment>
<accession>Q99314</accession>
<accession>D6W2R9</accession>
<feature type="chain" id="PRO_0000097596" description="Something about silencing protein 5">
    <location>
        <begin position="1"/>
        <end position="248"/>
    </location>
</feature>
<feature type="domain" description="YEATS" evidence="1">
    <location>
        <begin position="1"/>
        <end position="139"/>
    </location>
</feature>
<feature type="region of interest" description="Disordered" evidence="2">
    <location>
        <begin position="223"/>
        <end position="248"/>
    </location>
</feature>
<feature type="modified residue" description="Phosphoserine" evidence="9">
    <location>
        <position position="144"/>
    </location>
</feature>
<feature type="strand" evidence="10">
    <location>
        <begin position="4"/>
        <end position="17"/>
    </location>
</feature>
<feature type="strand" evidence="10">
    <location>
        <begin position="31"/>
        <end position="40"/>
    </location>
</feature>
<feature type="strand" evidence="10">
    <location>
        <begin position="52"/>
        <end position="58"/>
    </location>
</feature>
<feature type="strand" evidence="10">
    <location>
        <begin position="63"/>
        <end position="65"/>
    </location>
</feature>
<feature type="strand" evidence="10">
    <location>
        <begin position="67"/>
        <end position="70"/>
    </location>
</feature>
<feature type="strand" evidence="10">
    <location>
        <begin position="76"/>
        <end position="82"/>
    </location>
</feature>
<feature type="strand" evidence="10">
    <location>
        <begin position="85"/>
        <end position="93"/>
    </location>
</feature>
<feature type="helix" evidence="10">
    <location>
        <begin position="94"/>
        <end position="96"/>
    </location>
</feature>
<feature type="strand" evidence="10">
    <location>
        <begin position="99"/>
        <end position="106"/>
    </location>
</feature>
<feature type="strand" evidence="10">
    <location>
        <begin position="109"/>
        <end position="122"/>
    </location>
</feature>
<feature type="helix" evidence="10">
    <location>
        <begin position="126"/>
        <end position="132"/>
    </location>
</feature>
<feature type="turn" evidence="10">
    <location>
        <begin position="133"/>
        <end position="135"/>
    </location>
</feature>
<dbReference type="EMBL" id="X92441">
    <property type="protein sequence ID" value="CAA63176.1"/>
    <property type="molecule type" value="Genomic_DNA"/>
</dbReference>
<dbReference type="EMBL" id="Z75121">
    <property type="protein sequence ID" value="CAA99429.1"/>
    <property type="molecule type" value="Genomic_DNA"/>
</dbReference>
<dbReference type="EMBL" id="Z75122">
    <property type="protein sequence ID" value="CAA99431.1"/>
    <property type="molecule type" value="Genomic_DNA"/>
</dbReference>
<dbReference type="EMBL" id="BK006948">
    <property type="protein sequence ID" value="DAA10985.1"/>
    <property type="molecule type" value="Genomic_DNA"/>
</dbReference>
<dbReference type="PIR" id="S60940">
    <property type="entry name" value="S60940"/>
</dbReference>
<dbReference type="RefSeq" id="NP_014856.1">
    <property type="nucleotide sequence ID" value="NM_001183632.1"/>
</dbReference>
<dbReference type="PDB" id="7F5M">
    <property type="method" value="X-ray"/>
    <property type="resolution" value="2.40 A"/>
    <property type="chains" value="A/B=2-139"/>
</dbReference>
<dbReference type="PDBsum" id="7F5M"/>
<dbReference type="SMR" id="Q99314"/>
<dbReference type="BioGRID" id="34608">
    <property type="interactions" value="89"/>
</dbReference>
<dbReference type="ComplexPortal" id="CPX-777">
    <property type="entry name" value="SAS acetyltransferase complex"/>
</dbReference>
<dbReference type="DIP" id="DIP-2945N"/>
<dbReference type="FunCoup" id="Q99314">
    <property type="interactions" value="63"/>
</dbReference>
<dbReference type="IntAct" id="Q99314">
    <property type="interactions" value="7"/>
</dbReference>
<dbReference type="MINT" id="Q99314"/>
<dbReference type="STRING" id="4932.YOR213C"/>
<dbReference type="iPTMnet" id="Q99314"/>
<dbReference type="PaxDb" id="4932-YOR213C"/>
<dbReference type="PeptideAtlas" id="Q99314"/>
<dbReference type="EnsemblFungi" id="YOR213C_mRNA">
    <property type="protein sequence ID" value="YOR213C"/>
    <property type="gene ID" value="YOR213C"/>
</dbReference>
<dbReference type="GeneID" id="854388"/>
<dbReference type="KEGG" id="sce:YOR213C"/>
<dbReference type="AGR" id="SGD:S000005739"/>
<dbReference type="SGD" id="S000005739">
    <property type="gene designation" value="SAS5"/>
</dbReference>
<dbReference type="VEuPathDB" id="FungiDB:YOR213C"/>
<dbReference type="eggNOG" id="KOG3149">
    <property type="taxonomic scope" value="Eukaryota"/>
</dbReference>
<dbReference type="GeneTree" id="ENSGT00940000176465"/>
<dbReference type="HOGENOM" id="CLU_078004_0_0_1"/>
<dbReference type="InParanoid" id="Q99314"/>
<dbReference type="OMA" id="DAYIVEY"/>
<dbReference type="OrthoDB" id="1741717at2759"/>
<dbReference type="BioCyc" id="YEAST:G3O-33715-MONOMER"/>
<dbReference type="BioGRID-ORCS" id="854388">
    <property type="hits" value="0 hits in 10 CRISPR screens"/>
</dbReference>
<dbReference type="PRO" id="PR:Q99314"/>
<dbReference type="Proteomes" id="UP000002311">
    <property type="component" value="Chromosome XV"/>
</dbReference>
<dbReference type="RNAct" id="Q99314">
    <property type="molecule type" value="protein"/>
</dbReference>
<dbReference type="GO" id="GO:0000785">
    <property type="term" value="C:chromatin"/>
    <property type="evidence" value="ECO:0000314"/>
    <property type="project" value="SGD"/>
</dbReference>
<dbReference type="GO" id="GO:0000781">
    <property type="term" value="C:chromosome, telomeric region"/>
    <property type="evidence" value="ECO:0007669"/>
    <property type="project" value="GOC"/>
</dbReference>
<dbReference type="GO" id="GO:0031011">
    <property type="term" value="C:Ino80 complex"/>
    <property type="evidence" value="ECO:0000318"/>
    <property type="project" value="GO_Central"/>
</dbReference>
<dbReference type="GO" id="GO:0005634">
    <property type="term" value="C:nucleus"/>
    <property type="evidence" value="ECO:0000318"/>
    <property type="project" value="GO_Central"/>
</dbReference>
<dbReference type="GO" id="GO:0033255">
    <property type="term" value="C:SAS acetyltransferase complex"/>
    <property type="evidence" value="ECO:0000314"/>
    <property type="project" value="SGD"/>
</dbReference>
<dbReference type="GO" id="GO:0016514">
    <property type="term" value="C:SWI/SNF complex"/>
    <property type="evidence" value="ECO:0000318"/>
    <property type="project" value="GO_Central"/>
</dbReference>
<dbReference type="GO" id="GO:0005669">
    <property type="term" value="C:transcription factor TFIID complex"/>
    <property type="evidence" value="ECO:0000318"/>
    <property type="project" value="GO_Central"/>
</dbReference>
<dbReference type="GO" id="GO:0005674">
    <property type="term" value="C:transcription factor TFIIF complex"/>
    <property type="evidence" value="ECO:0000318"/>
    <property type="project" value="GO_Central"/>
</dbReference>
<dbReference type="GO" id="GO:0016407">
    <property type="term" value="F:acetyltransferase activity"/>
    <property type="evidence" value="ECO:0000314"/>
    <property type="project" value="SGD"/>
</dbReference>
<dbReference type="GO" id="GO:0004402">
    <property type="term" value="F:histone acetyltransferase activity"/>
    <property type="evidence" value="ECO:0000314"/>
    <property type="project" value="SGD"/>
</dbReference>
<dbReference type="GO" id="GO:0042393">
    <property type="term" value="F:histone binding"/>
    <property type="evidence" value="ECO:0000318"/>
    <property type="project" value="GO_Central"/>
</dbReference>
<dbReference type="GO" id="GO:0006338">
    <property type="term" value="P:chromatin remodeling"/>
    <property type="evidence" value="ECO:0000318"/>
    <property type="project" value="GO_Central"/>
</dbReference>
<dbReference type="GO" id="GO:0006357">
    <property type="term" value="P:regulation of transcription by RNA polymerase II"/>
    <property type="evidence" value="ECO:0000318"/>
    <property type="project" value="GO_Central"/>
</dbReference>
<dbReference type="GO" id="GO:0031509">
    <property type="term" value="P:subtelomeric heterochromatin formation"/>
    <property type="evidence" value="ECO:0000314"/>
    <property type="project" value="SGD"/>
</dbReference>
<dbReference type="CDD" id="cd16905">
    <property type="entry name" value="YEATS_Taf14_like"/>
    <property type="match status" value="1"/>
</dbReference>
<dbReference type="FunFam" id="2.60.40.1970:FF:000006">
    <property type="entry name" value="Transcription initiation factor TFIID subunit 14"/>
    <property type="match status" value="1"/>
</dbReference>
<dbReference type="Gene3D" id="2.60.40.1970">
    <property type="entry name" value="YEATS domain"/>
    <property type="match status" value="1"/>
</dbReference>
<dbReference type="InterPro" id="IPR016665">
    <property type="entry name" value="Sas5/TAF14"/>
</dbReference>
<dbReference type="InterPro" id="IPR038704">
    <property type="entry name" value="YEAST_sf"/>
</dbReference>
<dbReference type="InterPro" id="IPR005033">
    <property type="entry name" value="YEATS"/>
</dbReference>
<dbReference type="InterPro" id="IPR055129">
    <property type="entry name" value="YEATS_dom"/>
</dbReference>
<dbReference type="PANTHER" id="PTHR23195">
    <property type="entry name" value="YEATS DOMAIN"/>
    <property type="match status" value="1"/>
</dbReference>
<dbReference type="Pfam" id="PF03366">
    <property type="entry name" value="YEATS"/>
    <property type="match status" value="1"/>
</dbReference>
<dbReference type="PIRSF" id="PIRSF016551">
    <property type="entry name" value="SAS5/TFIID_14"/>
    <property type="match status" value="1"/>
</dbReference>
<dbReference type="PROSITE" id="PS51037">
    <property type="entry name" value="YEATS"/>
    <property type="match status" value="1"/>
</dbReference>
<name>SAS5_YEAST</name>
<sequence>MDHSIEVTFRVKTQQVIIPEQNIRGNELPLRRWQMELLMLDATGKEVEPTILSKCIYHLHSSFKQPKRRLNSLPFFIKETGWGEFNLKIECFFIGNAGKFSIEHDLTFEDDAYAVDYTVDVPHEFSHLNSELSKYFDLPWKVVSPEEEMSLRIADLPWIKSLALIDEDMMTDVVQMILNDPAVQRAIENHPRREQFFMFITQLPDDLLMKIQAFLKLPNKNSTKQERTNFGSDAIHKDEPVKAHNKLK</sequence>
<organism>
    <name type="scientific">Saccharomyces cerevisiae (strain ATCC 204508 / S288c)</name>
    <name type="common">Baker's yeast</name>
    <dbReference type="NCBI Taxonomy" id="559292"/>
    <lineage>
        <taxon>Eukaryota</taxon>
        <taxon>Fungi</taxon>
        <taxon>Dikarya</taxon>
        <taxon>Ascomycota</taxon>
        <taxon>Saccharomycotina</taxon>
        <taxon>Saccharomycetes</taxon>
        <taxon>Saccharomycetales</taxon>
        <taxon>Saccharomycetaceae</taxon>
        <taxon>Saccharomyces</taxon>
    </lineage>
</organism>
<gene>
    <name type="primary">SAS5</name>
    <name type="ordered locus">YOR213C</name>
</gene>
<evidence type="ECO:0000255" key="1">
    <source>
        <dbReference type="PROSITE-ProRule" id="PRU00376"/>
    </source>
</evidence>
<evidence type="ECO:0000256" key="2">
    <source>
        <dbReference type="SAM" id="MobiDB-lite"/>
    </source>
</evidence>
<evidence type="ECO:0000269" key="3">
    <source>
    </source>
</evidence>
<evidence type="ECO:0000269" key="4">
    <source>
    </source>
</evidence>
<evidence type="ECO:0000269" key="5">
    <source>
    </source>
</evidence>
<evidence type="ECO:0000269" key="6">
    <source>
    </source>
</evidence>
<evidence type="ECO:0000269" key="7">
    <source>
    </source>
</evidence>
<evidence type="ECO:0000269" key="8">
    <source>
    </source>
</evidence>
<evidence type="ECO:0007744" key="9">
    <source>
    </source>
</evidence>
<evidence type="ECO:0007829" key="10">
    <source>
        <dbReference type="PDB" id="7F5M"/>
    </source>
</evidence>